<gene>
    <name type="primary">tshz1-b</name>
    <name type="synonym">tsh1</name>
    <name type="synonym">Xtsh1b</name>
</gene>
<reference key="1">
    <citation type="journal article" date="2006" name="Dev. Biol.">
        <title>Xenopus Teashirt1 regulates posterior identity in brain and cranial neural crest.</title>
        <authorList>
            <person name="Koebernick K."/>
            <person name="Kashef J."/>
            <person name="Pieler T."/>
            <person name="Wedlich D."/>
        </authorList>
    </citation>
    <scope>NUCLEOTIDE SEQUENCE [MRNA]</scope>
    <scope>DEVELOPMENTAL STAGE</scope>
</reference>
<feature type="chain" id="PRO_0000399475" description="Teashirt homolog 1-B">
    <location>
        <begin position="1"/>
        <end position="1077"/>
    </location>
</feature>
<feature type="zinc finger region" description="C2H2-type 1" evidence="1">
    <location>
        <begin position="248"/>
        <end position="272"/>
    </location>
</feature>
<feature type="zinc finger region" description="C2H2-type 2" evidence="1">
    <location>
        <begin position="309"/>
        <end position="333"/>
    </location>
</feature>
<feature type="zinc finger region" description="C2H2-type 3" evidence="1">
    <location>
        <begin position="418"/>
        <end position="442"/>
    </location>
</feature>
<feature type="DNA-binding region" description="Homeobox">
    <location>
        <begin position="885"/>
        <end position="955"/>
    </location>
</feature>
<feature type="zinc finger region" description="C2H2-type 4" evidence="1">
    <location>
        <begin position="970"/>
        <end position="992"/>
    </location>
</feature>
<feature type="zinc finger region" description="C2H2-type 5" evidence="1">
    <location>
        <begin position="1037"/>
        <end position="1060"/>
    </location>
</feature>
<feature type="region of interest" description="Disordered" evidence="2">
    <location>
        <begin position="1"/>
        <end position="110"/>
    </location>
</feature>
<feature type="region of interest" description="Disordered" evidence="2">
    <location>
        <begin position="142"/>
        <end position="179"/>
    </location>
</feature>
<feature type="region of interest" description="Disordered" evidence="2">
    <location>
        <begin position="274"/>
        <end position="300"/>
    </location>
</feature>
<feature type="region of interest" description="Disordered" evidence="2">
    <location>
        <begin position="362"/>
        <end position="394"/>
    </location>
</feature>
<feature type="region of interest" description="Disordered" evidence="2">
    <location>
        <begin position="473"/>
        <end position="530"/>
    </location>
</feature>
<feature type="region of interest" description="Disordered" evidence="2">
    <location>
        <begin position="849"/>
        <end position="873"/>
    </location>
</feature>
<feature type="compositionally biased region" description="Acidic residues" evidence="2">
    <location>
        <begin position="26"/>
        <end position="36"/>
    </location>
</feature>
<feature type="compositionally biased region" description="Polar residues" evidence="2">
    <location>
        <begin position="56"/>
        <end position="69"/>
    </location>
</feature>
<feature type="compositionally biased region" description="Low complexity" evidence="2">
    <location>
        <begin position="160"/>
        <end position="179"/>
    </location>
</feature>
<feature type="compositionally biased region" description="Basic and acidic residues" evidence="2">
    <location>
        <begin position="274"/>
        <end position="286"/>
    </location>
</feature>
<feature type="compositionally biased region" description="Basic and acidic residues" evidence="2">
    <location>
        <begin position="497"/>
        <end position="529"/>
    </location>
</feature>
<feature type="compositionally biased region" description="Polar residues" evidence="2">
    <location>
        <begin position="853"/>
        <end position="862"/>
    </location>
</feature>
<dbReference type="EMBL" id="AY854807">
    <property type="protein sequence ID" value="AAX48759.1"/>
    <property type="molecule type" value="mRNA"/>
</dbReference>
<dbReference type="RefSeq" id="NP_001165937.1">
    <property type="nucleotide sequence ID" value="NM_001172466.1"/>
</dbReference>
<dbReference type="SMR" id="Q2HNT1"/>
<dbReference type="GeneID" id="100379091"/>
<dbReference type="KEGG" id="xla:100379091"/>
<dbReference type="AGR" id="Xenbase:XB-GENE-6461981"/>
<dbReference type="CTD" id="100379091"/>
<dbReference type="Xenbase" id="XB-GENE-6461981">
    <property type="gene designation" value="tshz1.L"/>
</dbReference>
<dbReference type="OrthoDB" id="5815793at2759"/>
<dbReference type="Proteomes" id="UP000186698">
    <property type="component" value="Chromosome 6L"/>
</dbReference>
<dbReference type="Bgee" id="100379091">
    <property type="expression patterns" value="Expressed in pancreas and 14 other cell types or tissues"/>
</dbReference>
<dbReference type="GO" id="GO:0005634">
    <property type="term" value="C:nucleus"/>
    <property type="evidence" value="ECO:0000318"/>
    <property type="project" value="GO_Central"/>
</dbReference>
<dbReference type="GO" id="GO:0003677">
    <property type="term" value="F:DNA binding"/>
    <property type="evidence" value="ECO:0000318"/>
    <property type="project" value="GO_Central"/>
</dbReference>
<dbReference type="GO" id="GO:0000981">
    <property type="term" value="F:DNA-binding transcription factor activity, RNA polymerase II-specific"/>
    <property type="evidence" value="ECO:0000318"/>
    <property type="project" value="GO_Central"/>
</dbReference>
<dbReference type="GO" id="GO:0008270">
    <property type="term" value="F:zinc ion binding"/>
    <property type="evidence" value="ECO:0007669"/>
    <property type="project" value="UniProtKB-KW"/>
</dbReference>
<dbReference type="GO" id="GO:0006357">
    <property type="term" value="P:regulation of transcription by RNA polymerase II"/>
    <property type="evidence" value="ECO:0000318"/>
    <property type="project" value="GO_Central"/>
</dbReference>
<dbReference type="CDD" id="cd00086">
    <property type="entry name" value="homeodomain"/>
    <property type="match status" value="1"/>
</dbReference>
<dbReference type="Gene3D" id="3.30.160.60">
    <property type="entry name" value="Classic Zinc Finger"/>
    <property type="match status" value="2"/>
</dbReference>
<dbReference type="InterPro" id="IPR001356">
    <property type="entry name" value="HD"/>
</dbReference>
<dbReference type="InterPro" id="IPR027008">
    <property type="entry name" value="Teashirt_fam"/>
</dbReference>
<dbReference type="InterPro" id="IPR036236">
    <property type="entry name" value="Znf_C2H2_sf"/>
</dbReference>
<dbReference type="InterPro" id="IPR013087">
    <property type="entry name" value="Znf_C2H2_type"/>
</dbReference>
<dbReference type="PANTHER" id="PTHR12487:SF6">
    <property type="entry name" value="TEASHIRT HOMOLOG 1"/>
    <property type="match status" value="1"/>
</dbReference>
<dbReference type="PANTHER" id="PTHR12487">
    <property type="entry name" value="TEASHIRT-RELATED"/>
    <property type="match status" value="1"/>
</dbReference>
<dbReference type="SMART" id="SM00389">
    <property type="entry name" value="HOX"/>
    <property type="match status" value="1"/>
</dbReference>
<dbReference type="SMART" id="SM00355">
    <property type="entry name" value="ZnF_C2H2"/>
    <property type="match status" value="5"/>
</dbReference>
<dbReference type="SUPFAM" id="SSF57667">
    <property type="entry name" value="beta-beta-alpha zinc fingers"/>
    <property type="match status" value="1"/>
</dbReference>
<dbReference type="PROSITE" id="PS00028">
    <property type="entry name" value="ZINC_FINGER_C2H2_1"/>
    <property type="match status" value="4"/>
</dbReference>
<dbReference type="PROSITE" id="PS50157">
    <property type="entry name" value="ZINC_FINGER_C2H2_2"/>
    <property type="match status" value="3"/>
</dbReference>
<evidence type="ECO:0000255" key="1">
    <source>
        <dbReference type="PROSITE-ProRule" id="PRU00042"/>
    </source>
</evidence>
<evidence type="ECO:0000256" key="2">
    <source>
        <dbReference type="SAM" id="MobiDB-lite"/>
    </source>
</evidence>
<evidence type="ECO:0000269" key="3">
    <source>
    </source>
</evidence>
<evidence type="ECO:0000305" key="4"/>
<name>TSH1B_XENLA</name>
<comment type="function">
    <text evidence="4">Probable transcriptional regulator involved in developmental processes. May act as a transcriptional repressor (Potential). Involved in two major neuronal regionalization processes: primary anteroposterior (AP) axis patterning of the CNS and segmentation of the cranial neuronal crest (CNS) development.</text>
</comment>
<comment type="subcellular location">
    <subcellularLocation>
        <location>Nucleus</location>
    </subcellularLocation>
</comment>
<comment type="developmental stage">
    <text evidence="3">Expressed in early blastula stage embryos with a decrease during gastrulation. Expressed at early neurula stage in two broad wedge-shaped domains within the neuroectoderm flanking the midline. Throughout neurula stages, the anterior limit of its expression is maintained at a position posterior to hindbrain rhombomere 5. Confined to the trunk region of the prospective CNS. At stage 26, expressed in a gradient spanning the presumptive hindbrain/spinal cord boundary, the diencephalon, the pronephros and the presumptive olfactory placodes. From late neurula stage on, its expression becomes detectable in a distinct population of emigrating cranial neural crest (CNC) cells of the third branchial arch. At stage 26, expressed in the entire hyoid and branchial arch region and strongly reduced in this domain at tailbud stage.</text>
</comment>
<comment type="similarity">
    <text evidence="4">Belongs to the teashirt C2H2-type zinc-finger protein family.</text>
</comment>
<accession>Q2HNT1</accession>
<proteinExistence type="evidence at transcript level"/>
<keyword id="KW-0217">Developmental protein</keyword>
<keyword id="KW-0238">DNA-binding</keyword>
<keyword id="KW-0371">Homeobox</keyword>
<keyword id="KW-0479">Metal-binding</keyword>
<keyword id="KW-0539">Nucleus</keyword>
<keyword id="KW-1185">Reference proteome</keyword>
<keyword id="KW-0677">Repeat</keyword>
<keyword id="KW-0678">Repressor</keyword>
<keyword id="KW-0804">Transcription</keyword>
<keyword id="KW-0805">Transcription regulation</keyword>
<keyword id="KW-0862">Zinc</keyword>
<keyword id="KW-0863">Zinc-finger</keyword>
<sequence>MPRRKQQAPRRSAAYVPAEELKAAETEEDNLEDDGLSLDVQDSEYLYNDEHEIKETQSYQNSPISSATNPDAGYGSPFSEASDHLADFKSTSSKEGQDKEDGQSTENASYPTDSLAQIKAVYTNLLSECCWSNLALDLKKSNEKASPTTNTDKSSKSEASGPTSDPGTPTTITSSSCTNTSTSICVTTSNSAISNTASGYDWHQAALAKTLQQTSYGLLPEPSLFSTVQLYRQSNKLYGSVFTGASKFRCKDCSAAYDTLVELTVHMNETGHYRDDNRDREAERTKRWSKPRKRSLMEMEGKEDAQKVLKCMYCGHSFESLQDLSVHMIKTKHYQKVPLKEPVPAITKLVPSTKKRALQDIALPDSPEQAGISPGASVSESAKDPKAANPYVTPNNRYGYQNGASYTWQFEARKAQILKCMECGSSHDTLQQLTAHMMVTGHFLKVTNSASKKGKQLVMDAVLEEKIQSIPLPPTTHARLPATYIKKPPDSPTGSTHSEEKKDPEKEKVNIGEVEKKIKEENEDPEKIEPATLYQYLREEDLDDSPKGGLDILKSLENTVSSAISKAQNGAPSWGGYPSIHAAYQLPGTIKALQPSVQSVQIQPSYASSVKTMSSDHNALIHSPGSLTPPPHKSNVSAMEELVEKVTGKINVKKEEKVLEKEKVISAKPPSPMAKENKEILKPEEANSKTLKKHNEAEIQKPKKETPIESHALNGTEPLKAKVTNGCTSLGIITDHSPEQSFINPLSALQSIMNTHLGKVSKPVSPSLDPLAMLYKISNSMLDKPIYPTTPMKQVESIDRYYYEDSDQPIDLTKSKNKPLVTSITDPVSSPLRESALMDISDMVKNLTGRLTPKSSTPSTVSEKSDADGSSFEEALDELSPVHKRKGRQSNWNPQHLLILQAQFASSLRETAEGKYIMSDLGPQERVHISKFTGLSMTTISHWLANVKYQLRRTGGTKFLKNLDTGHPVFFCNDCASQFRTASTYIGHLETHLGFSLKDLSKLSLNQIQEQQNVTKVITNKALSSVGLIEEDSGSTFQCKLCNRTFASKHAVKLHLSKTHGKSPEDHVIYVTELEKQ</sequence>
<protein>
    <recommendedName>
        <fullName>Teashirt homolog 1-B</fullName>
    </recommendedName>
    <alternativeName>
        <fullName>Teashirt 1B</fullName>
    </alternativeName>
</protein>
<organism>
    <name type="scientific">Xenopus laevis</name>
    <name type="common">African clawed frog</name>
    <dbReference type="NCBI Taxonomy" id="8355"/>
    <lineage>
        <taxon>Eukaryota</taxon>
        <taxon>Metazoa</taxon>
        <taxon>Chordata</taxon>
        <taxon>Craniata</taxon>
        <taxon>Vertebrata</taxon>
        <taxon>Euteleostomi</taxon>
        <taxon>Amphibia</taxon>
        <taxon>Batrachia</taxon>
        <taxon>Anura</taxon>
        <taxon>Pipoidea</taxon>
        <taxon>Pipidae</taxon>
        <taxon>Xenopodinae</taxon>
        <taxon>Xenopus</taxon>
        <taxon>Xenopus</taxon>
    </lineage>
</organism>